<feature type="chain" id="PRO_0000184861" description="3-methyl-2-oxobutanoate hydroxymethyltransferase">
    <location>
        <begin position="1"/>
        <end position="281"/>
    </location>
</feature>
<feature type="region of interest" description="Disordered" evidence="2">
    <location>
        <begin position="1"/>
        <end position="20"/>
    </location>
</feature>
<feature type="active site" description="Proton acceptor" evidence="1">
    <location>
        <position position="199"/>
    </location>
</feature>
<feature type="binding site" evidence="1">
    <location>
        <begin position="62"/>
        <end position="63"/>
    </location>
    <ligand>
        <name>3-methyl-2-oxobutanoate</name>
        <dbReference type="ChEBI" id="CHEBI:11851"/>
    </ligand>
</feature>
<feature type="binding site" evidence="1">
    <location>
        <position position="62"/>
    </location>
    <ligand>
        <name>Mg(2+)</name>
        <dbReference type="ChEBI" id="CHEBI:18420"/>
    </ligand>
</feature>
<feature type="binding site" evidence="1">
    <location>
        <position position="101"/>
    </location>
    <ligand>
        <name>3-methyl-2-oxobutanoate</name>
        <dbReference type="ChEBI" id="CHEBI:11851"/>
    </ligand>
</feature>
<feature type="binding site" evidence="1">
    <location>
        <position position="101"/>
    </location>
    <ligand>
        <name>Mg(2+)</name>
        <dbReference type="ChEBI" id="CHEBI:18420"/>
    </ligand>
</feature>
<feature type="binding site" evidence="1">
    <location>
        <position position="131"/>
    </location>
    <ligand>
        <name>3-methyl-2-oxobutanoate</name>
        <dbReference type="ChEBI" id="CHEBI:11851"/>
    </ligand>
</feature>
<feature type="binding site" evidence="1">
    <location>
        <position position="133"/>
    </location>
    <ligand>
        <name>Mg(2+)</name>
        <dbReference type="ChEBI" id="CHEBI:18420"/>
    </ligand>
</feature>
<protein>
    <recommendedName>
        <fullName evidence="1">3-methyl-2-oxobutanoate hydroxymethyltransferase</fullName>
        <ecNumber evidence="1">2.1.2.11</ecNumber>
    </recommendedName>
    <alternativeName>
        <fullName evidence="1">Ketopantoate hydroxymethyltransferase</fullName>
        <shortName evidence="1">KPHMT</shortName>
    </alternativeName>
</protein>
<name>PANB_MYCBO</name>
<keyword id="KW-0963">Cytoplasm</keyword>
<keyword id="KW-0460">Magnesium</keyword>
<keyword id="KW-0479">Metal-binding</keyword>
<keyword id="KW-0566">Pantothenate biosynthesis</keyword>
<keyword id="KW-1185">Reference proteome</keyword>
<keyword id="KW-0808">Transferase</keyword>
<comment type="function">
    <text evidence="1">Catalyzes the reversible reaction in which hydroxymethyl group from 5,10-methylenetetrahydrofolate is transferred onto alpha-ketoisovalerate to form ketopantoate.</text>
</comment>
<comment type="catalytic activity">
    <reaction evidence="1">
        <text>3-methyl-2-oxobutanoate + (6R)-5,10-methylene-5,6,7,8-tetrahydrofolate + H2O = 2-dehydropantoate + (6S)-5,6,7,8-tetrahydrofolate</text>
        <dbReference type="Rhea" id="RHEA:11824"/>
        <dbReference type="ChEBI" id="CHEBI:11561"/>
        <dbReference type="ChEBI" id="CHEBI:11851"/>
        <dbReference type="ChEBI" id="CHEBI:15377"/>
        <dbReference type="ChEBI" id="CHEBI:15636"/>
        <dbReference type="ChEBI" id="CHEBI:57453"/>
        <dbReference type="EC" id="2.1.2.11"/>
    </reaction>
</comment>
<comment type="cofactor">
    <cofactor evidence="1">
        <name>Mg(2+)</name>
        <dbReference type="ChEBI" id="CHEBI:18420"/>
    </cofactor>
    <text evidence="1">Binds 1 Mg(2+) ion per subunit.</text>
</comment>
<comment type="pathway">
    <text evidence="1">Cofactor biosynthesis; (R)-pantothenate biosynthesis; (R)-pantoate from 3-methyl-2-oxobutanoate: step 1/2.</text>
</comment>
<comment type="subunit">
    <text evidence="1">Homodecamer; pentamer of dimers.</text>
</comment>
<comment type="subcellular location">
    <subcellularLocation>
        <location evidence="1">Cytoplasm</location>
    </subcellularLocation>
</comment>
<comment type="similarity">
    <text evidence="1">Belongs to the PanB family.</text>
</comment>
<organism>
    <name type="scientific">Mycobacterium bovis (strain ATCC BAA-935 / AF2122/97)</name>
    <dbReference type="NCBI Taxonomy" id="233413"/>
    <lineage>
        <taxon>Bacteria</taxon>
        <taxon>Bacillati</taxon>
        <taxon>Actinomycetota</taxon>
        <taxon>Actinomycetes</taxon>
        <taxon>Mycobacteriales</taxon>
        <taxon>Mycobacteriaceae</taxon>
        <taxon>Mycobacterium</taxon>
        <taxon>Mycobacterium tuberculosis complex</taxon>
    </lineage>
</organism>
<accession>P0C2T4</accession>
<accession>A0A1R3Y0Y7</accession>
<accession>P0A5Q9</accession>
<accession>Q10505</accession>
<accession>X2BKH7</accession>
<reference key="1">
    <citation type="journal article" date="2003" name="Proc. Natl. Acad. Sci. U.S.A.">
        <title>The complete genome sequence of Mycobacterium bovis.</title>
        <authorList>
            <person name="Garnier T."/>
            <person name="Eiglmeier K."/>
            <person name="Camus J.-C."/>
            <person name="Medina N."/>
            <person name="Mansoor H."/>
            <person name="Pryor M."/>
            <person name="Duthoy S."/>
            <person name="Grondin S."/>
            <person name="Lacroix C."/>
            <person name="Monsempe C."/>
            <person name="Simon S."/>
            <person name="Harris B."/>
            <person name="Atkin R."/>
            <person name="Doggett J."/>
            <person name="Mayes R."/>
            <person name="Keating L."/>
            <person name="Wheeler P.R."/>
            <person name="Parkhill J."/>
            <person name="Barrell B.G."/>
            <person name="Cole S.T."/>
            <person name="Gordon S.V."/>
            <person name="Hewinson R.G."/>
        </authorList>
    </citation>
    <scope>NUCLEOTIDE SEQUENCE [LARGE SCALE GENOMIC DNA]</scope>
    <source>
        <strain>ATCC BAA-935 / AF2122/97</strain>
    </source>
</reference>
<reference key="2">
    <citation type="journal article" date="2017" name="Genome Announc.">
        <title>Updated reference genome sequence and annotation of Mycobacterium bovis AF2122/97.</title>
        <authorList>
            <person name="Malone K.M."/>
            <person name="Farrell D."/>
            <person name="Stuber T.P."/>
            <person name="Schubert O.T."/>
            <person name="Aebersold R."/>
            <person name="Robbe-Austerman S."/>
            <person name="Gordon S.V."/>
        </authorList>
    </citation>
    <scope>NUCLEOTIDE SEQUENCE [LARGE SCALE GENOMIC DNA]</scope>
    <scope>GENOME REANNOTATION</scope>
    <source>
        <strain>ATCC BAA-935 / AF2122/97</strain>
    </source>
</reference>
<dbReference type="EC" id="2.1.2.11" evidence="1"/>
<dbReference type="EMBL" id="LT708304">
    <property type="protein sequence ID" value="SIU00857.1"/>
    <property type="molecule type" value="Genomic_DNA"/>
</dbReference>
<dbReference type="RefSeq" id="NP_855898.1">
    <property type="nucleotide sequence ID" value="NC_002945.3"/>
</dbReference>
<dbReference type="RefSeq" id="WP_003411489.1">
    <property type="nucleotide sequence ID" value="NC_002945.4"/>
</dbReference>
<dbReference type="SMR" id="P0C2T4"/>
<dbReference type="KEGG" id="mbo:BQ2027_MB2249"/>
<dbReference type="PATRIC" id="fig|233413.5.peg.2467"/>
<dbReference type="UniPathway" id="UPA00028">
    <property type="reaction ID" value="UER00003"/>
</dbReference>
<dbReference type="Proteomes" id="UP000001419">
    <property type="component" value="Chromosome"/>
</dbReference>
<dbReference type="GO" id="GO:0005737">
    <property type="term" value="C:cytoplasm"/>
    <property type="evidence" value="ECO:0007669"/>
    <property type="project" value="UniProtKB-SubCell"/>
</dbReference>
<dbReference type="GO" id="GO:0003864">
    <property type="term" value="F:3-methyl-2-oxobutanoate hydroxymethyltransferase activity"/>
    <property type="evidence" value="ECO:0007669"/>
    <property type="project" value="UniProtKB-UniRule"/>
</dbReference>
<dbReference type="GO" id="GO:0000287">
    <property type="term" value="F:magnesium ion binding"/>
    <property type="evidence" value="ECO:0007669"/>
    <property type="project" value="TreeGrafter"/>
</dbReference>
<dbReference type="GO" id="GO:0015940">
    <property type="term" value="P:pantothenate biosynthetic process"/>
    <property type="evidence" value="ECO:0007669"/>
    <property type="project" value="UniProtKB-UniRule"/>
</dbReference>
<dbReference type="CDD" id="cd06557">
    <property type="entry name" value="KPHMT-like"/>
    <property type="match status" value="1"/>
</dbReference>
<dbReference type="FunFam" id="3.20.20.60:FF:000003">
    <property type="entry name" value="3-methyl-2-oxobutanoate hydroxymethyltransferase"/>
    <property type="match status" value="1"/>
</dbReference>
<dbReference type="Gene3D" id="3.20.20.60">
    <property type="entry name" value="Phosphoenolpyruvate-binding domains"/>
    <property type="match status" value="1"/>
</dbReference>
<dbReference type="HAMAP" id="MF_00156">
    <property type="entry name" value="PanB"/>
    <property type="match status" value="1"/>
</dbReference>
<dbReference type="InterPro" id="IPR003700">
    <property type="entry name" value="Pantoate_hydroxy_MeTrfase"/>
</dbReference>
<dbReference type="InterPro" id="IPR015813">
    <property type="entry name" value="Pyrv/PenolPyrv_kinase-like_dom"/>
</dbReference>
<dbReference type="InterPro" id="IPR040442">
    <property type="entry name" value="Pyrv_kinase-like_dom_sf"/>
</dbReference>
<dbReference type="NCBIfam" id="TIGR00222">
    <property type="entry name" value="panB"/>
    <property type="match status" value="1"/>
</dbReference>
<dbReference type="NCBIfam" id="NF001452">
    <property type="entry name" value="PRK00311.1"/>
    <property type="match status" value="1"/>
</dbReference>
<dbReference type="PANTHER" id="PTHR20881">
    <property type="entry name" value="3-METHYL-2-OXOBUTANOATE HYDROXYMETHYLTRANSFERASE"/>
    <property type="match status" value="1"/>
</dbReference>
<dbReference type="PANTHER" id="PTHR20881:SF0">
    <property type="entry name" value="3-METHYL-2-OXOBUTANOATE HYDROXYMETHYLTRANSFERASE"/>
    <property type="match status" value="1"/>
</dbReference>
<dbReference type="Pfam" id="PF02548">
    <property type="entry name" value="Pantoate_transf"/>
    <property type="match status" value="1"/>
</dbReference>
<dbReference type="PIRSF" id="PIRSF000388">
    <property type="entry name" value="Pantoate_hydroxy_MeTrfase"/>
    <property type="match status" value="1"/>
</dbReference>
<dbReference type="SUPFAM" id="SSF51621">
    <property type="entry name" value="Phosphoenolpyruvate/pyruvate domain"/>
    <property type="match status" value="1"/>
</dbReference>
<evidence type="ECO:0000255" key="1">
    <source>
        <dbReference type="HAMAP-Rule" id="MF_00156"/>
    </source>
</evidence>
<evidence type="ECO:0000256" key="2">
    <source>
        <dbReference type="SAM" id="MobiDB-lite"/>
    </source>
</evidence>
<sequence length="281" mass="29336">MSEQTIYGANTPGGSGPRTKIRTHHLQRWKADGHKWAMLTAYDYSTARIFDEAGIPVLLVGDSAANVVYGYDTTVPISIDELIPLVRGVVRGAPHALVVADLPFGSYEAGPTAALAAATRFLKDGGAHAVKLEGGERVAEQIACLTAAGIPVMAHIGFTPQSVNTLGGFRVQGRGDAAEQTIADAIAVAEAGAFAVVMEMVPAELATQITGKLTIPTVGIGAGPNCDGQVLVWQDMAGFSGAKTARFVKRYADVGGELRRAAMQYAQEVAGGVFPADEHSF</sequence>
<gene>
    <name evidence="1" type="primary">panB</name>
    <name type="ordered locus">BQ2027_MB2249</name>
</gene>
<proteinExistence type="inferred from homology"/>